<reference key="1">
    <citation type="journal article" date="2008" name="J. Bacteriol.">
        <title>The complete genome sequence of Thermococcus onnurineus NA1 reveals a mixed heterotrophic and carboxydotrophic metabolism.</title>
        <authorList>
            <person name="Lee H.S."/>
            <person name="Kang S.G."/>
            <person name="Bae S.S."/>
            <person name="Lim J.K."/>
            <person name="Cho Y."/>
            <person name="Kim Y.J."/>
            <person name="Jeon J.H."/>
            <person name="Cha S.-S."/>
            <person name="Kwon K.K."/>
            <person name="Kim H.-T."/>
            <person name="Park C.-J."/>
            <person name="Lee H.-W."/>
            <person name="Kim S.I."/>
            <person name="Chun J."/>
            <person name="Colwell R.R."/>
            <person name="Kim S.-J."/>
            <person name="Lee J.-H."/>
        </authorList>
    </citation>
    <scope>NUCLEOTIDE SEQUENCE [LARGE SCALE GENOMIC DNA]</scope>
    <source>
        <strain>NA1</strain>
    </source>
</reference>
<dbReference type="EC" id="3.1.13.-" evidence="1"/>
<dbReference type="EMBL" id="CP000855">
    <property type="protein sequence ID" value="ACJ15514.1"/>
    <property type="molecule type" value="Genomic_DNA"/>
</dbReference>
<dbReference type="RefSeq" id="WP_012570987.1">
    <property type="nucleotide sequence ID" value="NC_011529.1"/>
</dbReference>
<dbReference type="SMR" id="B6YSI2"/>
<dbReference type="STRING" id="523850.TON_0030"/>
<dbReference type="GeneID" id="7017676"/>
<dbReference type="KEGG" id="ton:TON_0030"/>
<dbReference type="PATRIC" id="fig|523850.10.peg.30"/>
<dbReference type="eggNOG" id="arCOG01575">
    <property type="taxonomic scope" value="Archaea"/>
</dbReference>
<dbReference type="HOGENOM" id="CLU_063514_0_0_2"/>
<dbReference type="OrthoDB" id="24266at2157"/>
<dbReference type="Proteomes" id="UP000002727">
    <property type="component" value="Chromosome"/>
</dbReference>
<dbReference type="GO" id="GO:0000177">
    <property type="term" value="C:cytoplasmic exosome (RNase complex)"/>
    <property type="evidence" value="ECO:0007669"/>
    <property type="project" value="TreeGrafter"/>
</dbReference>
<dbReference type="GO" id="GO:0000175">
    <property type="term" value="F:3'-5'-RNA exonuclease activity"/>
    <property type="evidence" value="ECO:0007669"/>
    <property type="project" value="UniProtKB-UniRule"/>
</dbReference>
<dbReference type="GO" id="GO:0003723">
    <property type="term" value="F:RNA binding"/>
    <property type="evidence" value="ECO:0007669"/>
    <property type="project" value="TreeGrafter"/>
</dbReference>
<dbReference type="GO" id="GO:0010467">
    <property type="term" value="P:gene expression"/>
    <property type="evidence" value="ECO:0007669"/>
    <property type="project" value="UniProtKB-ARBA"/>
</dbReference>
<dbReference type="GO" id="GO:0016075">
    <property type="term" value="P:rRNA catabolic process"/>
    <property type="evidence" value="ECO:0007669"/>
    <property type="project" value="TreeGrafter"/>
</dbReference>
<dbReference type="CDD" id="cd11366">
    <property type="entry name" value="RNase_PH_archRRP41"/>
    <property type="match status" value="1"/>
</dbReference>
<dbReference type="FunFam" id="3.30.230.70:FF:000004">
    <property type="entry name" value="Exosome complex component Rrp41"/>
    <property type="match status" value="1"/>
</dbReference>
<dbReference type="Gene3D" id="3.30.230.70">
    <property type="entry name" value="GHMP Kinase, N-terminal domain"/>
    <property type="match status" value="1"/>
</dbReference>
<dbReference type="HAMAP" id="MF_00591">
    <property type="entry name" value="Exosome_Rrp41"/>
    <property type="match status" value="1"/>
</dbReference>
<dbReference type="InterPro" id="IPR001247">
    <property type="entry name" value="ExoRNase_PH_dom1"/>
</dbReference>
<dbReference type="InterPro" id="IPR015847">
    <property type="entry name" value="ExoRNase_PH_dom2"/>
</dbReference>
<dbReference type="InterPro" id="IPR036345">
    <property type="entry name" value="ExoRNase_PH_dom2_sf"/>
</dbReference>
<dbReference type="InterPro" id="IPR027408">
    <property type="entry name" value="PNPase/RNase_PH_dom_sf"/>
</dbReference>
<dbReference type="InterPro" id="IPR020568">
    <property type="entry name" value="Ribosomal_Su5_D2-typ_SF"/>
</dbReference>
<dbReference type="InterPro" id="IPR050080">
    <property type="entry name" value="RNase_PH"/>
</dbReference>
<dbReference type="InterPro" id="IPR011807">
    <property type="entry name" value="Rrp41"/>
</dbReference>
<dbReference type="NCBIfam" id="TIGR02065">
    <property type="entry name" value="ECX1"/>
    <property type="match status" value="1"/>
</dbReference>
<dbReference type="PANTHER" id="PTHR11953">
    <property type="entry name" value="EXOSOME COMPLEX COMPONENT"/>
    <property type="match status" value="1"/>
</dbReference>
<dbReference type="PANTHER" id="PTHR11953:SF0">
    <property type="entry name" value="EXOSOME COMPLEX COMPONENT RRP41"/>
    <property type="match status" value="1"/>
</dbReference>
<dbReference type="Pfam" id="PF01138">
    <property type="entry name" value="RNase_PH"/>
    <property type="match status" value="1"/>
</dbReference>
<dbReference type="Pfam" id="PF03725">
    <property type="entry name" value="RNase_PH_C"/>
    <property type="match status" value="1"/>
</dbReference>
<dbReference type="SUPFAM" id="SSF55666">
    <property type="entry name" value="Ribonuclease PH domain 2-like"/>
    <property type="match status" value="1"/>
</dbReference>
<dbReference type="SUPFAM" id="SSF54211">
    <property type="entry name" value="Ribosomal protein S5 domain 2-like"/>
    <property type="match status" value="1"/>
</dbReference>
<sequence>MMGKPEDLKLIDENGRRIDGRKKYELRPIKMEVGVLKNADGSAYVEWGKNKILAAVYGPREIHPKHLQRPDRAILRVRYNMAPFSVEERKKPGPDRRSVEISKVIRGALEPALILEMFPRTAIDIFIEVLQADAGTRVAGITAASLALADAGIPMRDLVAACAAGKIEGEIVLDLNKEEDNYGEADVPVAIMPLKNDITLLQMDGYLTRDEFIEAVRLAIKGAKAVYQKQREALKEKYLKIAEEVGGGE</sequence>
<name>RRP41_THEON</name>
<evidence type="ECO:0000255" key="1">
    <source>
        <dbReference type="HAMAP-Rule" id="MF_00591"/>
    </source>
</evidence>
<proteinExistence type="inferred from homology"/>
<keyword id="KW-0963">Cytoplasm</keyword>
<keyword id="KW-0269">Exonuclease</keyword>
<keyword id="KW-0271">Exosome</keyword>
<keyword id="KW-0378">Hydrolase</keyword>
<keyword id="KW-0540">Nuclease</keyword>
<protein>
    <recommendedName>
        <fullName evidence="1">Exosome complex component Rrp41</fullName>
        <ecNumber evidence="1">3.1.13.-</ecNumber>
    </recommendedName>
</protein>
<gene>
    <name evidence="1" type="primary">rrp41</name>
    <name type="ordered locus">TON_0030</name>
</gene>
<comment type="function">
    <text evidence="1">Catalytic component of the exosome, which is a complex involved in RNA degradation. Has 3'-&gt;5' exoribonuclease activity. Can also synthesize heteromeric RNA-tails.</text>
</comment>
<comment type="subunit">
    <text evidence="1">Component of the archaeal exosome complex. Forms a hexameric ring-like arrangement composed of 3 Rrp41-Rrp42 heterodimers. The hexameric ring associates with a trimer of Rrp4 and/or Csl4 subunits.</text>
</comment>
<comment type="subcellular location">
    <subcellularLocation>
        <location evidence="1">Cytoplasm</location>
    </subcellularLocation>
</comment>
<comment type="similarity">
    <text evidence="1">Belongs to the RNase PH family. Rrp41 subfamily.</text>
</comment>
<accession>B6YSI2</accession>
<feature type="chain" id="PRO_1000129795" description="Exosome complex component Rrp41">
    <location>
        <begin position="1"/>
        <end position="249"/>
    </location>
</feature>
<organism>
    <name type="scientific">Thermococcus onnurineus (strain NA1)</name>
    <dbReference type="NCBI Taxonomy" id="523850"/>
    <lineage>
        <taxon>Archaea</taxon>
        <taxon>Methanobacteriati</taxon>
        <taxon>Methanobacteriota</taxon>
        <taxon>Thermococci</taxon>
        <taxon>Thermococcales</taxon>
        <taxon>Thermococcaceae</taxon>
        <taxon>Thermococcus</taxon>
    </lineage>
</organism>